<gene>
    <name type="primary">purD</name>
    <name type="ordered locus">jhp_1140</name>
</gene>
<reference key="1">
    <citation type="journal article" date="1999" name="Nature">
        <title>Genomic sequence comparison of two unrelated isolates of the human gastric pathogen Helicobacter pylori.</title>
        <authorList>
            <person name="Alm R.A."/>
            <person name="Ling L.-S.L."/>
            <person name="Moir D.T."/>
            <person name="King B.L."/>
            <person name="Brown E.D."/>
            <person name="Doig P.C."/>
            <person name="Smith D.R."/>
            <person name="Noonan B."/>
            <person name="Guild B.C."/>
            <person name="deJonge B.L."/>
            <person name="Carmel G."/>
            <person name="Tummino P.J."/>
            <person name="Caruso A."/>
            <person name="Uria-Nickelsen M."/>
            <person name="Mills D.M."/>
            <person name="Ives C."/>
            <person name="Gibson R."/>
            <person name="Merberg D."/>
            <person name="Mills S.D."/>
            <person name="Jiang Q."/>
            <person name="Taylor D.E."/>
            <person name="Vovis G.F."/>
            <person name="Trust T.J."/>
        </authorList>
    </citation>
    <scope>NUCLEOTIDE SEQUENCE [LARGE SCALE GENOMIC DNA]</scope>
    <source>
        <strain>J99 / ATCC 700824</strain>
    </source>
</reference>
<evidence type="ECO:0000255" key="1">
    <source>
        <dbReference type="PROSITE-ProRule" id="PRU00409"/>
    </source>
</evidence>
<evidence type="ECO:0000305" key="2"/>
<dbReference type="EC" id="6.3.4.13"/>
<dbReference type="EMBL" id="AE001439">
    <property type="protein sequence ID" value="AAD06709.1"/>
    <property type="molecule type" value="Genomic_DNA"/>
</dbReference>
<dbReference type="PIR" id="A71846">
    <property type="entry name" value="A71846"/>
</dbReference>
<dbReference type="RefSeq" id="WP_000654427.1">
    <property type="nucleotide sequence ID" value="NC_000921.1"/>
</dbReference>
<dbReference type="SMR" id="Q9ZK07"/>
<dbReference type="KEGG" id="hpj:jhp_1140"/>
<dbReference type="PATRIC" id="fig|85963.30.peg.1436"/>
<dbReference type="eggNOG" id="COG0151">
    <property type="taxonomic scope" value="Bacteria"/>
</dbReference>
<dbReference type="UniPathway" id="UPA00074">
    <property type="reaction ID" value="UER00125"/>
</dbReference>
<dbReference type="Proteomes" id="UP000000804">
    <property type="component" value="Chromosome"/>
</dbReference>
<dbReference type="GO" id="GO:0005524">
    <property type="term" value="F:ATP binding"/>
    <property type="evidence" value="ECO:0007669"/>
    <property type="project" value="UniProtKB-KW"/>
</dbReference>
<dbReference type="GO" id="GO:0046872">
    <property type="term" value="F:metal ion binding"/>
    <property type="evidence" value="ECO:0007669"/>
    <property type="project" value="InterPro"/>
</dbReference>
<dbReference type="GO" id="GO:0004637">
    <property type="term" value="F:phosphoribosylamine-glycine ligase activity"/>
    <property type="evidence" value="ECO:0007669"/>
    <property type="project" value="UniProtKB-UniRule"/>
</dbReference>
<dbReference type="GO" id="GO:0006189">
    <property type="term" value="P:'de novo' IMP biosynthetic process"/>
    <property type="evidence" value="ECO:0007669"/>
    <property type="project" value="UniProtKB-UniRule"/>
</dbReference>
<dbReference type="GO" id="GO:0009113">
    <property type="term" value="P:purine nucleobase biosynthetic process"/>
    <property type="evidence" value="ECO:0007669"/>
    <property type="project" value="InterPro"/>
</dbReference>
<dbReference type="Gene3D" id="3.40.50.20">
    <property type="match status" value="1"/>
</dbReference>
<dbReference type="Gene3D" id="3.30.1490.20">
    <property type="entry name" value="ATP-grasp fold, A domain"/>
    <property type="match status" value="1"/>
</dbReference>
<dbReference type="Gene3D" id="3.30.470.20">
    <property type="entry name" value="ATP-grasp fold, B domain"/>
    <property type="match status" value="1"/>
</dbReference>
<dbReference type="Gene3D" id="3.90.600.10">
    <property type="entry name" value="Phosphoribosylglycinamide synthetase, C-terminal domain"/>
    <property type="match status" value="1"/>
</dbReference>
<dbReference type="HAMAP" id="MF_00138">
    <property type="entry name" value="GARS"/>
    <property type="match status" value="1"/>
</dbReference>
<dbReference type="InterPro" id="IPR011761">
    <property type="entry name" value="ATP-grasp"/>
</dbReference>
<dbReference type="InterPro" id="IPR013815">
    <property type="entry name" value="ATP_grasp_subdomain_1"/>
</dbReference>
<dbReference type="InterPro" id="IPR016185">
    <property type="entry name" value="PreATP-grasp_dom_sf"/>
</dbReference>
<dbReference type="InterPro" id="IPR020561">
    <property type="entry name" value="PRibGlycinamid_synth_ATP-grasp"/>
</dbReference>
<dbReference type="InterPro" id="IPR000115">
    <property type="entry name" value="PRibGlycinamide_synth"/>
</dbReference>
<dbReference type="InterPro" id="IPR020560">
    <property type="entry name" value="PRibGlycinamide_synth_C-dom"/>
</dbReference>
<dbReference type="InterPro" id="IPR037123">
    <property type="entry name" value="PRibGlycinamide_synth_C_sf"/>
</dbReference>
<dbReference type="InterPro" id="IPR020562">
    <property type="entry name" value="PRibGlycinamide_synth_N"/>
</dbReference>
<dbReference type="InterPro" id="IPR011054">
    <property type="entry name" value="Rudment_hybrid_motif"/>
</dbReference>
<dbReference type="NCBIfam" id="TIGR00877">
    <property type="entry name" value="purD"/>
    <property type="match status" value="1"/>
</dbReference>
<dbReference type="PANTHER" id="PTHR43472">
    <property type="entry name" value="PHOSPHORIBOSYLAMINE--GLYCINE LIGASE"/>
    <property type="match status" value="1"/>
</dbReference>
<dbReference type="PANTHER" id="PTHR43472:SF1">
    <property type="entry name" value="PHOSPHORIBOSYLAMINE--GLYCINE LIGASE, CHLOROPLASTIC"/>
    <property type="match status" value="1"/>
</dbReference>
<dbReference type="Pfam" id="PF01071">
    <property type="entry name" value="GARS_A"/>
    <property type="match status" value="1"/>
</dbReference>
<dbReference type="Pfam" id="PF02843">
    <property type="entry name" value="GARS_C"/>
    <property type="match status" value="1"/>
</dbReference>
<dbReference type="Pfam" id="PF02844">
    <property type="entry name" value="GARS_N"/>
    <property type="match status" value="1"/>
</dbReference>
<dbReference type="SMART" id="SM01209">
    <property type="entry name" value="GARS_A"/>
    <property type="match status" value="1"/>
</dbReference>
<dbReference type="SMART" id="SM01210">
    <property type="entry name" value="GARS_C"/>
    <property type="match status" value="1"/>
</dbReference>
<dbReference type="SUPFAM" id="SSF56059">
    <property type="entry name" value="Glutathione synthetase ATP-binding domain-like"/>
    <property type="match status" value="1"/>
</dbReference>
<dbReference type="SUPFAM" id="SSF52440">
    <property type="entry name" value="PreATP-grasp domain"/>
    <property type="match status" value="1"/>
</dbReference>
<dbReference type="SUPFAM" id="SSF51246">
    <property type="entry name" value="Rudiment single hybrid motif"/>
    <property type="match status" value="1"/>
</dbReference>
<dbReference type="PROSITE" id="PS50975">
    <property type="entry name" value="ATP_GRASP"/>
    <property type="match status" value="1"/>
</dbReference>
<name>PUR2_HELPJ</name>
<keyword id="KW-0067">ATP-binding</keyword>
<keyword id="KW-0436">Ligase</keyword>
<keyword id="KW-0547">Nucleotide-binding</keyword>
<keyword id="KW-0658">Purine biosynthesis</keyword>
<accession>Q9ZK07</accession>
<sequence length="424" mass="47511">MKDNNNYNVLIVGNKGREYALAQRLQQDERVNALYFCLGNGGTQDLGENLECEHYEHIVELALKKQIHLAIISEEEPLILGLTEMLEKAGILVFGASKEAAKLEASKSYMKAFVKECGIKSASYFETNDLKEALNYIQNASFPLVIKALNKNTSIVHHQEEALKILEDALKQSNEPVIIEPFLEGFELSVTALIANDDFILLPFCQNYKRLLEGDNGVNTGGMGAIAPANFFSNELEEKIKNHIFKPTLEKLQADNTPFKGVLLAEIVIIEEKGVLEPYLLDFSVRFKDIECQTILPLVENPLLDLFLATAKGELHSLELVFSKEFVMSVALVSRNYPTSSSPKQTLYIDPVDEKKGHLILGEVEQDNGVFESSGGRVIFAIGRGKSLLEARNHAYEIAQKVHFEGMFYRKDIGFKVLDLKEYS</sequence>
<protein>
    <recommendedName>
        <fullName>Phosphoribosylamine--glycine ligase</fullName>
        <ecNumber>6.3.4.13</ecNumber>
    </recommendedName>
    <alternativeName>
        <fullName>GARS</fullName>
    </alternativeName>
    <alternativeName>
        <fullName>Glycinamide ribonucleotide synthetase</fullName>
    </alternativeName>
    <alternativeName>
        <fullName>Phosphoribosylglycinamide synthetase</fullName>
    </alternativeName>
</protein>
<organism>
    <name type="scientific">Helicobacter pylori (strain J99 / ATCC 700824)</name>
    <name type="common">Campylobacter pylori J99</name>
    <dbReference type="NCBI Taxonomy" id="85963"/>
    <lineage>
        <taxon>Bacteria</taxon>
        <taxon>Pseudomonadati</taxon>
        <taxon>Campylobacterota</taxon>
        <taxon>Epsilonproteobacteria</taxon>
        <taxon>Campylobacterales</taxon>
        <taxon>Helicobacteraceae</taxon>
        <taxon>Helicobacter</taxon>
    </lineage>
</organism>
<feature type="chain" id="PRO_0000151454" description="Phosphoribosylamine--glycine ligase">
    <location>
        <begin position="1"/>
        <end position="424"/>
    </location>
</feature>
<feature type="domain" description="ATP-grasp" evidence="1">
    <location>
        <begin position="111"/>
        <end position="312"/>
    </location>
</feature>
<feature type="binding site" evidence="1">
    <location>
        <begin position="137"/>
        <end position="189"/>
    </location>
    <ligand>
        <name>ATP</name>
        <dbReference type="ChEBI" id="CHEBI:30616"/>
    </ligand>
</feature>
<comment type="catalytic activity">
    <reaction>
        <text>5-phospho-beta-D-ribosylamine + glycine + ATP = N(1)-(5-phospho-beta-D-ribosyl)glycinamide + ADP + phosphate + H(+)</text>
        <dbReference type="Rhea" id="RHEA:17453"/>
        <dbReference type="ChEBI" id="CHEBI:15378"/>
        <dbReference type="ChEBI" id="CHEBI:30616"/>
        <dbReference type="ChEBI" id="CHEBI:43474"/>
        <dbReference type="ChEBI" id="CHEBI:57305"/>
        <dbReference type="ChEBI" id="CHEBI:58681"/>
        <dbReference type="ChEBI" id="CHEBI:143788"/>
        <dbReference type="ChEBI" id="CHEBI:456216"/>
        <dbReference type="EC" id="6.3.4.13"/>
    </reaction>
</comment>
<comment type="pathway">
    <text>Purine metabolism; IMP biosynthesis via de novo pathway; N(1)-(5-phospho-D-ribosyl)glycinamide from 5-phospho-alpha-D-ribose 1-diphosphate: step 2/2.</text>
</comment>
<comment type="similarity">
    <text evidence="2">Belongs to the GARS family.</text>
</comment>
<proteinExistence type="inferred from homology"/>